<dbReference type="EMBL" id="D37947">
    <property type="protein sequence ID" value="BAA07162.1"/>
    <property type="molecule type" value="Genomic_DNA"/>
</dbReference>
<protein>
    <recommendedName>
        <fullName>Uncharacterized 7.9 kDa protein in PE 5'region</fullName>
    </recommendedName>
    <alternativeName>
        <fullName>ORF1</fullName>
    </alternativeName>
</protein>
<feature type="chain" id="PRO_0000133078" description="Uncharacterized 7.9 kDa protein in PE 5'region">
    <location>
        <begin position="1"/>
        <end position="67"/>
    </location>
</feature>
<name>YPE1_NPVLD</name>
<reference key="1">
    <citation type="journal article" date="1992" name="J. Gen. Virol.">
        <title>Nucleotide sequence of the polyhedron envelope protein gene region of the Lymantria dispar nuclear polyhedrosis virus.</title>
        <authorList>
            <person name="Bjoernson R.M."/>
            <person name="Rohrmann G.F."/>
        </authorList>
    </citation>
    <scope>NUCLEOTIDE SEQUENCE [GENOMIC DNA]</scope>
</reference>
<reference key="2">
    <citation type="submission" date="1994-09" db="EMBL/GenBank/DDBJ databases">
        <authorList>
            <person name="Rohrmann G.F."/>
        </authorList>
    </citation>
    <scope>SEQUENCE REVISION</scope>
</reference>
<sequence>MSGCWARRARPWIRWRTSKVSCARCKNAWARRRARRYTRPPPSRRLCTGSRRVWSRCAPSCARSRNA</sequence>
<organism>
    <name type="scientific">Lymantria dispar multicapsid nuclear polyhedrosis virus</name>
    <name type="common">LdMNPV</name>
    <dbReference type="NCBI Taxonomy" id="10449"/>
    <lineage>
        <taxon>Viruses</taxon>
        <taxon>Viruses incertae sedis</taxon>
        <taxon>Naldaviricetes</taxon>
        <taxon>Lefavirales</taxon>
        <taxon>Baculoviridae</taxon>
        <taxon>Alphabaculovirus</taxon>
        <taxon>Alphabaculovirus lydisparis</taxon>
    </lineage>
</organism>
<proteinExistence type="predicted"/>
<organismHost>
    <name type="scientific">Lepidoptera</name>
    <name type="common">butterflies and moths</name>
    <dbReference type="NCBI Taxonomy" id="7088"/>
</organismHost>
<accession>P36866</accession>
<accession>Q90116</accession>